<protein>
    <recommendedName>
        <fullName evidence="3">Amino acid transporter AVT1J</fullName>
        <shortName evidence="2">AtAvt1J</shortName>
    </recommendedName>
</protein>
<sequence>MSEDKDYMSEPFIVKKIDDEESLLDDYNPQGNTSFSKTCFHGINALSGVGILSVPYALASGGWLSLIILFTVAITTFYCAILIKRCMEMDPLLRSYPDIGYKAFGNTGRVIVSIFMNLELYLVATSFLILEGDNLNKLFSNVGLNFMGLEFQGKQMFIIMVALIILPSVWLDNMRILSYVSASGVFASGVILASIFSVGAFEGVGFKNNDSEVFRLNGVATSVSLYAFCYCAHPVFPTLYTSMKNKRQFSNVMIICFTICTFIYASVAVLGYLMYGSDVESQITLNLPTDKLSSKVAIWTTLVNPIAKFALMVTPIIDAMRSRFSRVLPNKRASGFLLSTILVTSNVIVALLLPFFGDLMSLVGAFLSASASVILPCLCYLKISGKYQRLGFETLVLIGITLTGIVVVITGTYQAVKDIFGRF</sequence>
<comment type="subcellular location">
    <subcellularLocation>
        <location evidence="1">Membrane</location>
        <topology evidence="1">Multi-pass membrane protein</topology>
    </subcellularLocation>
</comment>
<comment type="alternative products">
    <event type="alternative splicing"/>
    <isoform>
        <id>Q9LXF8-1</id>
        <name>1</name>
        <sequence type="displayed"/>
    </isoform>
    <text evidence="3">Additional isoforms seem to exist.</text>
</comment>
<comment type="similarity">
    <text evidence="3">Belongs to the amino acid/polyamine transporter 2 family. Amino acid/auxin permease (AAAP) (TC 2.A.18.5) subfamily.</text>
</comment>
<comment type="sequence caution" evidence="3">
    <conflict type="miscellaneous discrepancy">
        <sequence resource="EMBL" id="BX829753"/>
    </conflict>
    <text>Sequencing errors.</text>
</comment>
<accession>Q9LXF8</accession>
<name>AVT1J_ARATH</name>
<proteinExistence type="evidence at transcript level"/>
<dbReference type="EMBL" id="AL353993">
    <property type="protein sequence ID" value="CAB89334.1"/>
    <property type="molecule type" value="Genomic_DNA"/>
</dbReference>
<dbReference type="EMBL" id="CP002688">
    <property type="protein sequence ID" value="AED92134.1"/>
    <property type="molecule type" value="Genomic_DNA"/>
</dbReference>
<dbReference type="EMBL" id="BX829753">
    <property type="status" value="NOT_ANNOTATED_CDS"/>
    <property type="molecule type" value="mRNA"/>
</dbReference>
<dbReference type="PIR" id="T49959">
    <property type="entry name" value="T49959"/>
</dbReference>
<dbReference type="RefSeq" id="NP_197028.1">
    <molecule id="Q9LXF8-1"/>
    <property type="nucleotide sequence ID" value="NM_121528.3"/>
</dbReference>
<dbReference type="SMR" id="Q9LXF8"/>
<dbReference type="FunCoup" id="Q9LXF8">
    <property type="interactions" value="245"/>
</dbReference>
<dbReference type="IntAct" id="Q9LXF8">
    <property type="interactions" value="13"/>
</dbReference>
<dbReference type="STRING" id="3702.Q9LXF8"/>
<dbReference type="PaxDb" id="3702-AT5G15240.1"/>
<dbReference type="EnsemblPlants" id="AT5G15240.1">
    <molecule id="Q9LXF8-1"/>
    <property type="protein sequence ID" value="AT5G15240.1"/>
    <property type="gene ID" value="AT5G15240"/>
</dbReference>
<dbReference type="GeneID" id="831376"/>
<dbReference type="Gramene" id="AT5G15240.1">
    <molecule id="Q9LXF8-1"/>
    <property type="protein sequence ID" value="AT5G15240.1"/>
    <property type="gene ID" value="AT5G15240"/>
</dbReference>
<dbReference type="KEGG" id="ath:AT5G15240"/>
<dbReference type="Araport" id="AT5G15240"/>
<dbReference type="TAIR" id="AT5G15240"/>
<dbReference type="eggNOG" id="KOG1303">
    <property type="taxonomic scope" value="Eukaryota"/>
</dbReference>
<dbReference type="InParanoid" id="Q9LXF8"/>
<dbReference type="OMA" id="MVKYKVD"/>
<dbReference type="OrthoDB" id="655540at2759"/>
<dbReference type="PhylomeDB" id="Q9LXF8"/>
<dbReference type="PRO" id="PR:Q9LXF8"/>
<dbReference type="Proteomes" id="UP000006548">
    <property type="component" value="Chromosome 5"/>
</dbReference>
<dbReference type="ExpressionAtlas" id="Q9LXF8">
    <property type="expression patterns" value="baseline and differential"/>
</dbReference>
<dbReference type="GO" id="GO:0031090">
    <property type="term" value="C:organelle membrane"/>
    <property type="evidence" value="ECO:0007669"/>
    <property type="project" value="UniProtKB-ARBA"/>
</dbReference>
<dbReference type="GO" id="GO:0006865">
    <property type="term" value="P:amino acid transport"/>
    <property type="evidence" value="ECO:0007669"/>
    <property type="project" value="UniProtKB-KW"/>
</dbReference>
<dbReference type="InterPro" id="IPR013057">
    <property type="entry name" value="AA_transpt_TM"/>
</dbReference>
<dbReference type="PANTHER" id="PTHR22950">
    <property type="entry name" value="AMINO ACID TRANSPORTER"/>
    <property type="match status" value="1"/>
</dbReference>
<dbReference type="PANTHER" id="PTHR22950:SF705">
    <property type="entry name" value="AMINO ACID TRANSPORTER AVT1I-LIKE"/>
    <property type="match status" value="1"/>
</dbReference>
<dbReference type="Pfam" id="PF01490">
    <property type="entry name" value="Aa_trans"/>
    <property type="match status" value="1"/>
</dbReference>
<feature type="chain" id="PRO_0000440111" description="Amino acid transporter AVT1J">
    <location>
        <begin position="1"/>
        <end position="423"/>
    </location>
</feature>
<feature type="transmembrane region" description="Helical; Name=1" evidence="1">
    <location>
        <begin position="39"/>
        <end position="59"/>
    </location>
</feature>
<feature type="transmembrane region" description="Helical; Name=2" evidence="1">
    <location>
        <begin position="63"/>
        <end position="83"/>
    </location>
</feature>
<feature type="transmembrane region" description="Helical; Name=3" evidence="1">
    <location>
        <begin position="110"/>
        <end position="130"/>
    </location>
</feature>
<feature type="transmembrane region" description="Helical; Name=4" evidence="1">
    <location>
        <begin position="151"/>
        <end position="171"/>
    </location>
</feature>
<feature type="transmembrane region" description="Helical; Name=5" evidence="1">
    <location>
        <begin position="186"/>
        <end position="206"/>
    </location>
</feature>
<feature type="transmembrane region" description="Helical; Name=6" evidence="1">
    <location>
        <begin position="219"/>
        <end position="239"/>
    </location>
</feature>
<feature type="transmembrane region" description="Helical; Name=7" evidence="1">
    <location>
        <begin position="252"/>
        <end position="272"/>
    </location>
</feature>
<feature type="transmembrane region" description="Helical; Name=8" evidence="1">
    <location>
        <begin position="297"/>
        <end position="317"/>
    </location>
</feature>
<feature type="transmembrane region" description="Helical; Name=9" evidence="1">
    <location>
        <begin position="333"/>
        <end position="355"/>
    </location>
</feature>
<feature type="transmembrane region" description="Helical; Name=10" evidence="1">
    <location>
        <begin position="359"/>
        <end position="381"/>
    </location>
</feature>
<feature type="transmembrane region" description="Helical; Name=11" evidence="1">
    <location>
        <begin position="390"/>
        <end position="410"/>
    </location>
</feature>
<evidence type="ECO:0000255" key="1"/>
<evidence type="ECO:0000303" key="2">
    <source>
    </source>
</evidence>
<evidence type="ECO:0000305" key="3"/>
<evidence type="ECO:0000312" key="4">
    <source>
        <dbReference type="Araport" id="AT5G15240"/>
    </source>
</evidence>
<evidence type="ECO:0000312" key="5">
    <source>
        <dbReference type="EMBL" id="CAB89334.1"/>
    </source>
</evidence>
<keyword id="KW-0025">Alternative splicing</keyword>
<keyword id="KW-0029">Amino-acid transport</keyword>
<keyword id="KW-0472">Membrane</keyword>
<keyword id="KW-1185">Reference proteome</keyword>
<keyword id="KW-0812">Transmembrane</keyword>
<keyword id="KW-1133">Transmembrane helix</keyword>
<keyword id="KW-0813">Transport</keyword>
<organism>
    <name type="scientific">Arabidopsis thaliana</name>
    <name type="common">Mouse-ear cress</name>
    <dbReference type="NCBI Taxonomy" id="3702"/>
    <lineage>
        <taxon>Eukaryota</taxon>
        <taxon>Viridiplantae</taxon>
        <taxon>Streptophyta</taxon>
        <taxon>Embryophyta</taxon>
        <taxon>Tracheophyta</taxon>
        <taxon>Spermatophyta</taxon>
        <taxon>Magnoliopsida</taxon>
        <taxon>eudicotyledons</taxon>
        <taxon>Gunneridae</taxon>
        <taxon>Pentapetalae</taxon>
        <taxon>rosids</taxon>
        <taxon>malvids</taxon>
        <taxon>Brassicales</taxon>
        <taxon>Brassicaceae</taxon>
        <taxon>Camelineae</taxon>
        <taxon>Arabidopsis</taxon>
    </lineage>
</organism>
<reference key="1">
    <citation type="journal article" date="2000" name="Nature">
        <title>Sequence and analysis of chromosome 5 of the plant Arabidopsis thaliana.</title>
        <authorList>
            <person name="Tabata S."/>
            <person name="Kaneko T."/>
            <person name="Nakamura Y."/>
            <person name="Kotani H."/>
            <person name="Kato T."/>
            <person name="Asamizu E."/>
            <person name="Miyajima N."/>
            <person name="Sasamoto S."/>
            <person name="Kimura T."/>
            <person name="Hosouchi T."/>
            <person name="Kawashima K."/>
            <person name="Kohara M."/>
            <person name="Matsumoto M."/>
            <person name="Matsuno A."/>
            <person name="Muraki A."/>
            <person name="Nakayama S."/>
            <person name="Nakazaki N."/>
            <person name="Naruo K."/>
            <person name="Okumura S."/>
            <person name="Shinpo S."/>
            <person name="Takeuchi C."/>
            <person name="Wada T."/>
            <person name="Watanabe A."/>
            <person name="Yamada M."/>
            <person name="Yasuda M."/>
            <person name="Sato S."/>
            <person name="de la Bastide M."/>
            <person name="Huang E."/>
            <person name="Spiegel L."/>
            <person name="Gnoj L."/>
            <person name="O'Shaughnessy A."/>
            <person name="Preston R."/>
            <person name="Habermann K."/>
            <person name="Murray J."/>
            <person name="Johnson D."/>
            <person name="Rohlfing T."/>
            <person name="Nelson J."/>
            <person name="Stoneking T."/>
            <person name="Pepin K."/>
            <person name="Spieth J."/>
            <person name="Sekhon M."/>
            <person name="Armstrong J."/>
            <person name="Becker M."/>
            <person name="Belter E."/>
            <person name="Cordum H."/>
            <person name="Cordes M."/>
            <person name="Courtney L."/>
            <person name="Courtney W."/>
            <person name="Dante M."/>
            <person name="Du H."/>
            <person name="Edwards J."/>
            <person name="Fryman J."/>
            <person name="Haakensen B."/>
            <person name="Lamar E."/>
            <person name="Latreille P."/>
            <person name="Leonard S."/>
            <person name="Meyer R."/>
            <person name="Mulvaney E."/>
            <person name="Ozersky P."/>
            <person name="Riley A."/>
            <person name="Strowmatt C."/>
            <person name="Wagner-McPherson C."/>
            <person name="Wollam A."/>
            <person name="Yoakum M."/>
            <person name="Bell M."/>
            <person name="Dedhia N."/>
            <person name="Parnell L."/>
            <person name="Shah R."/>
            <person name="Rodriguez M."/>
            <person name="Hoon See L."/>
            <person name="Vil D."/>
            <person name="Baker J."/>
            <person name="Kirchoff K."/>
            <person name="Toth K."/>
            <person name="King L."/>
            <person name="Bahret A."/>
            <person name="Miller B."/>
            <person name="Marra M.A."/>
            <person name="Martienssen R."/>
            <person name="McCombie W.R."/>
            <person name="Wilson R.K."/>
            <person name="Murphy G."/>
            <person name="Bancroft I."/>
            <person name="Volckaert G."/>
            <person name="Wambutt R."/>
            <person name="Duesterhoeft A."/>
            <person name="Stiekema W."/>
            <person name="Pohl T."/>
            <person name="Entian K.-D."/>
            <person name="Terryn N."/>
            <person name="Hartley N."/>
            <person name="Bent E."/>
            <person name="Johnson S."/>
            <person name="Langham S.-A."/>
            <person name="McCullagh B."/>
            <person name="Robben J."/>
            <person name="Grymonprez B."/>
            <person name="Zimmermann W."/>
            <person name="Ramsperger U."/>
            <person name="Wedler H."/>
            <person name="Balke K."/>
            <person name="Wedler E."/>
            <person name="Peters S."/>
            <person name="van Staveren M."/>
            <person name="Dirkse W."/>
            <person name="Mooijman P."/>
            <person name="Klein Lankhorst R."/>
            <person name="Weitzenegger T."/>
            <person name="Bothe G."/>
            <person name="Rose M."/>
            <person name="Hauf J."/>
            <person name="Berneiser S."/>
            <person name="Hempel S."/>
            <person name="Feldpausch M."/>
            <person name="Lamberth S."/>
            <person name="Villarroel R."/>
            <person name="Gielen J."/>
            <person name="Ardiles W."/>
            <person name="Bents O."/>
            <person name="Lemcke K."/>
            <person name="Kolesov G."/>
            <person name="Mayer K.F.X."/>
            <person name="Rudd S."/>
            <person name="Schoof H."/>
            <person name="Schueller C."/>
            <person name="Zaccaria P."/>
            <person name="Mewes H.-W."/>
            <person name="Bevan M."/>
            <person name="Fransz P.F."/>
        </authorList>
    </citation>
    <scope>NUCLEOTIDE SEQUENCE [LARGE SCALE GENOMIC DNA]</scope>
    <source>
        <strain>cv. Columbia</strain>
    </source>
</reference>
<reference key="2">
    <citation type="journal article" date="2017" name="Plant J.">
        <title>Araport11: a complete reannotation of the Arabidopsis thaliana reference genome.</title>
        <authorList>
            <person name="Cheng C.Y."/>
            <person name="Krishnakumar V."/>
            <person name="Chan A.P."/>
            <person name="Thibaud-Nissen F."/>
            <person name="Schobel S."/>
            <person name="Town C.D."/>
        </authorList>
    </citation>
    <scope>GENOME REANNOTATION</scope>
    <source>
        <strain>cv. Columbia</strain>
    </source>
</reference>
<reference key="3">
    <citation type="journal article" date="2004" name="Genome Res.">
        <title>Whole genome sequence comparisons and 'full-length' cDNA sequences: a combined approach to evaluate and improve Arabidopsis genome annotation.</title>
        <authorList>
            <person name="Castelli V."/>
            <person name="Aury J.-M."/>
            <person name="Jaillon O."/>
            <person name="Wincker P."/>
            <person name="Clepet C."/>
            <person name="Menard M."/>
            <person name="Cruaud C."/>
            <person name="Quetier F."/>
            <person name="Scarpelli C."/>
            <person name="Schaechter V."/>
            <person name="Temple G."/>
            <person name="Caboche M."/>
            <person name="Weissenbach J."/>
            <person name="Salanoubat M."/>
        </authorList>
    </citation>
    <scope>NUCLEOTIDE SEQUENCE [LARGE SCALE MRNA]</scope>
    <source>
        <strain>cv. Columbia</strain>
    </source>
</reference>
<reference key="4">
    <citation type="journal article" date="2017" name="FEBS Lett.">
        <title>Functional identification of AtAVT3, a family of vacuolar amino acid transporters, in Arabidopsis.</title>
        <authorList>
            <person name="Fujiki Y."/>
            <person name="Teshima H."/>
            <person name="Kashiwao S."/>
            <person name="Kawano-Kawada M."/>
            <person name="Ohsumi Y."/>
            <person name="Kakinuma Y."/>
            <person name="Sekito T."/>
        </authorList>
    </citation>
    <scope>GENE FAMILY</scope>
    <scope>NOMENCLATURE</scope>
</reference>
<gene>
    <name evidence="2" type="primary">AVT1J</name>
    <name evidence="4" type="ordered locus">At5g15240</name>
    <name evidence="5" type="ORF">F8M21.130</name>
</gene>